<accession>Q7N189</accession>
<keyword id="KW-0413">Isomerase</keyword>
<keyword id="KW-1185">Reference proteome</keyword>
<proteinExistence type="inferred from homology"/>
<dbReference type="EC" id="5.3.1.6" evidence="1"/>
<dbReference type="EMBL" id="BX571871">
    <property type="protein sequence ID" value="CAE15979.1"/>
    <property type="molecule type" value="Genomic_DNA"/>
</dbReference>
<dbReference type="RefSeq" id="WP_011147773.1">
    <property type="nucleotide sequence ID" value="NC_005126.1"/>
</dbReference>
<dbReference type="SMR" id="Q7N189"/>
<dbReference type="STRING" id="243265.plu3606"/>
<dbReference type="GeneID" id="48849853"/>
<dbReference type="KEGG" id="plu:plu3606"/>
<dbReference type="eggNOG" id="COG0120">
    <property type="taxonomic scope" value="Bacteria"/>
</dbReference>
<dbReference type="HOGENOM" id="CLU_056590_1_1_6"/>
<dbReference type="OrthoDB" id="5870696at2"/>
<dbReference type="UniPathway" id="UPA00115">
    <property type="reaction ID" value="UER00412"/>
</dbReference>
<dbReference type="Proteomes" id="UP000002514">
    <property type="component" value="Chromosome"/>
</dbReference>
<dbReference type="GO" id="GO:0005829">
    <property type="term" value="C:cytosol"/>
    <property type="evidence" value="ECO:0007669"/>
    <property type="project" value="TreeGrafter"/>
</dbReference>
<dbReference type="GO" id="GO:0004751">
    <property type="term" value="F:ribose-5-phosphate isomerase activity"/>
    <property type="evidence" value="ECO:0007669"/>
    <property type="project" value="UniProtKB-UniRule"/>
</dbReference>
<dbReference type="GO" id="GO:0006014">
    <property type="term" value="P:D-ribose metabolic process"/>
    <property type="evidence" value="ECO:0007669"/>
    <property type="project" value="TreeGrafter"/>
</dbReference>
<dbReference type="GO" id="GO:0009052">
    <property type="term" value="P:pentose-phosphate shunt, non-oxidative branch"/>
    <property type="evidence" value="ECO:0007669"/>
    <property type="project" value="UniProtKB-UniRule"/>
</dbReference>
<dbReference type="CDD" id="cd01398">
    <property type="entry name" value="RPI_A"/>
    <property type="match status" value="1"/>
</dbReference>
<dbReference type="FunFam" id="3.30.70.260:FF:000004">
    <property type="entry name" value="Ribose-5-phosphate isomerase A"/>
    <property type="match status" value="1"/>
</dbReference>
<dbReference type="FunFam" id="3.40.50.1360:FF:000001">
    <property type="entry name" value="Ribose-5-phosphate isomerase A"/>
    <property type="match status" value="1"/>
</dbReference>
<dbReference type="Gene3D" id="3.30.70.260">
    <property type="match status" value="1"/>
</dbReference>
<dbReference type="Gene3D" id="3.40.50.1360">
    <property type="match status" value="1"/>
</dbReference>
<dbReference type="HAMAP" id="MF_00170">
    <property type="entry name" value="Rib_5P_isom_A"/>
    <property type="match status" value="1"/>
</dbReference>
<dbReference type="InterPro" id="IPR037171">
    <property type="entry name" value="NagB/RpiA_transferase-like"/>
</dbReference>
<dbReference type="InterPro" id="IPR020672">
    <property type="entry name" value="Ribose5P_isomerase_typA_subgr"/>
</dbReference>
<dbReference type="InterPro" id="IPR004788">
    <property type="entry name" value="Ribose5P_isomerase_type_A"/>
</dbReference>
<dbReference type="NCBIfam" id="NF001924">
    <property type="entry name" value="PRK00702.1"/>
    <property type="match status" value="1"/>
</dbReference>
<dbReference type="NCBIfam" id="TIGR00021">
    <property type="entry name" value="rpiA"/>
    <property type="match status" value="1"/>
</dbReference>
<dbReference type="PANTHER" id="PTHR11934">
    <property type="entry name" value="RIBOSE-5-PHOSPHATE ISOMERASE"/>
    <property type="match status" value="1"/>
</dbReference>
<dbReference type="PANTHER" id="PTHR11934:SF0">
    <property type="entry name" value="RIBOSE-5-PHOSPHATE ISOMERASE"/>
    <property type="match status" value="1"/>
</dbReference>
<dbReference type="Pfam" id="PF06026">
    <property type="entry name" value="Rib_5-P_isom_A"/>
    <property type="match status" value="1"/>
</dbReference>
<dbReference type="SUPFAM" id="SSF75445">
    <property type="entry name" value="D-ribose-5-phosphate isomerase (RpiA), lid domain"/>
    <property type="match status" value="1"/>
</dbReference>
<dbReference type="SUPFAM" id="SSF100950">
    <property type="entry name" value="NagB/RpiA/CoA transferase-like"/>
    <property type="match status" value="1"/>
</dbReference>
<evidence type="ECO:0000255" key="1">
    <source>
        <dbReference type="HAMAP-Rule" id="MF_00170"/>
    </source>
</evidence>
<name>RPIA_PHOLL</name>
<organism>
    <name type="scientific">Photorhabdus laumondii subsp. laumondii (strain DSM 15139 / CIP 105565 / TT01)</name>
    <name type="common">Photorhabdus luminescens subsp. laumondii</name>
    <dbReference type="NCBI Taxonomy" id="243265"/>
    <lineage>
        <taxon>Bacteria</taxon>
        <taxon>Pseudomonadati</taxon>
        <taxon>Pseudomonadota</taxon>
        <taxon>Gammaproteobacteria</taxon>
        <taxon>Enterobacterales</taxon>
        <taxon>Morganellaceae</taxon>
        <taxon>Photorhabdus</taxon>
    </lineage>
</organism>
<feature type="chain" id="PRO_0000158445" description="Ribose-5-phosphate isomerase A">
    <location>
        <begin position="1"/>
        <end position="219"/>
    </location>
</feature>
<feature type="active site" description="Proton acceptor" evidence="1">
    <location>
        <position position="103"/>
    </location>
</feature>
<feature type="binding site" evidence="1">
    <location>
        <begin position="28"/>
        <end position="31"/>
    </location>
    <ligand>
        <name>substrate</name>
    </ligand>
</feature>
<feature type="binding site" evidence="1">
    <location>
        <begin position="81"/>
        <end position="84"/>
    </location>
    <ligand>
        <name>substrate</name>
    </ligand>
</feature>
<feature type="binding site" evidence="1">
    <location>
        <begin position="94"/>
        <end position="97"/>
    </location>
    <ligand>
        <name>substrate</name>
    </ligand>
</feature>
<feature type="binding site" evidence="1">
    <location>
        <position position="121"/>
    </location>
    <ligand>
        <name>substrate</name>
    </ligand>
</feature>
<protein>
    <recommendedName>
        <fullName evidence="1">Ribose-5-phosphate isomerase A</fullName>
        <ecNumber evidence="1">5.3.1.6</ecNumber>
    </recommendedName>
    <alternativeName>
        <fullName evidence="1">Phosphoriboisomerase A</fullName>
        <shortName evidence="1">PRI</shortName>
    </alternativeName>
</protein>
<gene>
    <name evidence="1" type="primary">rpiA</name>
    <name type="ordered locus">plu3606</name>
</gene>
<reference key="1">
    <citation type="journal article" date="2003" name="Nat. Biotechnol.">
        <title>The genome sequence of the entomopathogenic bacterium Photorhabdus luminescens.</title>
        <authorList>
            <person name="Duchaud E."/>
            <person name="Rusniok C."/>
            <person name="Frangeul L."/>
            <person name="Buchrieser C."/>
            <person name="Givaudan A."/>
            <person name="Taourit S."/>
            <person name="Bocs S."/>
            <person name="Boursaux-Eude C."/>
            <person name="Chandler M."/>
            <person name="Charles J.-F."/>
            <person name="Dassa E."/>
            <person name="Derose R."/>
            <person name="Derzelle S."/>
            <person name="Freyssinet G."/>
            <person name="Gaudriault S."/>
            <person name="Medigue C."/>
            <person name="Lanois A."/>
            <person name="Powell K."/>
            <person name="Siguier P."/>
            <person name="Vincent R."/>
            <person name="Wingate V."/>
            <person name="Zouine M."/>
            <person name="Glaser P."/>
            <person name="Boemare N."/>
            <person name="Danchin A."/>
            <person name="Kunst F."/>
        </authorList>
    </citation>
    <scope>NUCLEOTIDE SEQUENCE [LARGE SCALE GENOMIC DNA]</scope>
    <source>
        <strain>DSM 15139 / CIP 105565 / TT01</strain>
    </source>
</reference>
<comment type="function">
    <text evidence="1">Catalyzes the reversible conversion of ribose-5-phosphate to ribulose 5-phosphate.</text>
</comment>
<comment type="catalytic activity">
    <reaction evidence="1">
        <text>aldehydo-D-ribose 5-phosphate = D-ribulose 5-phosphate</text>
        <dbReference type="Rhea" id="RHEA:14657"/>
        <dbReference type="ChEBI" id="CHEBI:58121"/>
        <dbReference type="ChEBI" id="CHEBI:58273"/>
        <dbReference type="EC" id="5.3.1.6"/>
    </reaction>
</comment>
<comment type="pathway">
    <text evidence="1">Carbohydrate degradation; pentose phosphate pathway; D-ribose 5-phosphate from D-ribulose 5-phosphate (non-oxidative stage): step 1/1.</text>
</comment>
<comment type="subunit">
    <text evidence="1">Homodimer.</text>
</comment>
<comment type="similarity">
    <text evidence="1">Belongs to the ribose 5-phosphate isomerase family.</text>
</comment>
<sequence>MTQDELKKAVGWAALEFVTPGTVVGVGTGSTASHFIDALGSIKDQIEGAVSSSEASTEKLKSLGIPVFDCNEVDSLDIYVDGADEINGNMQMIKGGGAALTREKIIAAIAKKFVCIVDASKKVEVLGKFPLPVEVIPMARAYVARELVKLGGVPKYRQNVVTDNGNVILDVHNLAILDPAELENKINRISGVVTVGLFANRGADIVLMGTLDGVETITQ</sequence>